<evidence type="ECO:0000250" key="1"/>
<evidence type="ECO:0000250" key="2">
    <source>
        <dbReference type="UniProtKB" id="P05090"/>
    </source>
</evidence>
<evidence type="ECO:0000255" key="3"/>
<evidence type="ECO:0000305" key="4"/>
<protein>
    <recommendedName>
        <fullName>Apolipoprotein D</fullName>
        <shortName>Apo-D</shortName>
        <shortName>ApoD</shortName>
    </recommendedName>
</protein>
<feature type="signal peptide" evidence="1">
    <location>
        <begin position="1"/>
        <end position="21"/>
    </location>
</feature>
<feature type="chain" id="PRO_0000017875" description="Apolipoprotein D">
    <location>
        <begin position="22"/>
        <end position="189"/>
    </location>
</feature>
<feature type="modified residue" description="Pyrrolidone carboxylic acid" evidence="2">
    <location>
        <position position="22"/>
    </location>
</feature>
<feature type="glycosylation site" description="N-linked (GlcNAc...) asparagine" evidence="3">
    <location>
        <position position="66"/>
    </location>
</feature>
<feature type="glycosylation site" description="N-linked (GlcNAc...) asparagine" evidence="3">
    <location>
        <position position="99"/>
    </location>
</feature>
<feature type="disulfide bond" evidence="1">
    <location>
        <begin position="29"/>
        <end position="135"/>
    </location>
</feature>
<feature type="disulfide bond" evidence="1">
    <location>
        <begin position="62"/>
        <end position="186"/>
    </location>
</feature>
<proteinExistence type="evidence at transcript level"/>
<sequence length="189" mass="21478">MAPTLLLLLPALAGLISVAQGQAFHLGRCPTPPVQENFDVHKYLGRWYEIEKIPVSFEKGNCIQANYSLMENGNIKVLNQELRPDGTVNQIEGQATQSNLTEPAKLGVKFFQLMPTAPYWVLATDYENYALVYSCTTIIWLFHMDHVWILGRNRYLPPETVTYLKDILTANNIDIEKMTVTDQVNCPEF</sequence>
<name>APOD_RABIT</name>
<comment type="function">
    <text>APOD occurs in the macromolecular complex with lecithin-transport and binding of bilin. Appears to be able to transport a variety of ligands in a number of different contexts.</text>
</comment>
<comment type="subunit">
    <text>Homodimer.</text>
</comment>
<comment type="subcellular location">
    <subcellularLocation>
        <location>Secreted</location>
    </subcellularLocation>
</comment>
<comment type="tissue specificity">
    <text>Most heavily expressed in adrenal gland, lung, brain, testis and spleen.</text>
</comment>
<comment type="similarity">
    <text evidence="4">Belongs to the calycin superfamily. Lipocalin family.</text>
</comment>
<gene>
    <name type="primary">APOD</name>
</gene>
<dbReference type="EMBL" id="L42979">
    <property type="protein sequence ID" value="AAC41624.1"/>
    <property type="molecule type" value="mRNA"/>
</dbReference>
<dbReference type="PIR" id="A60954">
    <property type="entry name" value="A60954"/>
</dbReference>
<dbReference type="RefSeq" id="NP_001075727.1">
    <property type="nucleotide sequence ID" value="NM_001082258.2"/>
</dbReference>
<dbReference type="SMR" id="P37153"/>
<dbReference type="FunCoup" id="P37153">
    <property type="interactions" value="30"/>
</dbReference>
<dbReference type="STRING" id="9986.ENSOCUP00000016728"/>
<dbReference type="GlyCosmos" id="P37153">
    <property type="glycosylation" value="2 sites, No reported glycans"/>
</dbReference>
<dbReference type="PaxDb" id="9986-ENSOCUP00000016728"/>
<dbReference type="GeneID" id="100009080"/>
<dbReference type="KEGG" id="ocu:100009080"/>
<dbReference type="CTD" id="347"/>
<dbReference type="eggNOG" id="KOG4824">
    <property type="taxonomic scope" value="Eukaryota"/>
</dbReference>
<dbReference type="InParanoid" id="P37153"/>
<dbReference type="OrthoDB" id="565904at2759"/>
<dbReference type="Proteomes" id="UP000001811">
    <property type="component" value="Unplaced"/>
</dbReference>
<dbReference type="GO" id="GO:0022626">
    <property type="term" value="C:cytosolic ribosome"/>
    <property type="evidence" value="ECO:0000250"/>
    <property type="project" value="UniProtKB"/>
</dbReference>
<dbReference type="GO" id="GO:0030425">
    <property type="term" value="C:dendrite"/>
    <property type="evidence" value="ECO:0000250"/>
    <property type="project" value="UniProtKB"/>
</dbReference>
<dbReference type="GO" id="GO:0005615">
    <property type="term" value="C:extracellular space"/>
    <property type="evidence" value="ECO:0000250"/>
    <property type="project" value="UniProtKB"/>
</dbReference>
<dbReference type="GO" id="GO:0043025">
    <property type="term" value="C:neuronal cell body"/>
    <property type="evidence" value="ECO:0000250"/>
    <property type="project" value="UniProtKB"/>
</dbReference>
<dbReference type="GO" id="GO:0048471">
    <property type="term" value="C:perinuclear region of cytoplasm"/>
    <property type="evidence" value="ECO:0000250"/>
    <property type="project" value="UniProtKB"/>
</dbReference>
<dbReference type="GO" id="GO:0015485">
    <property type="term" value="F:cholesterol binding"/>
    <property type="evidence" value="ECO:0000250"/>
    <property type="project" value="UniProtKB"/>
</dbReference>
<dbReference type="GO" id="GO:0007420">
    <property type="term" value="P:brain development"/>
    <property type="evidence" value="ECO:0007669"/>
    <property type="project" value="InterPro"/>
</dbReference>
<dbReference type="GO" id="GO:0006006">
    <property type="term" value="P:glucose metabolic process"/>
    <property type="evidence" value="ECO:0000250"/>
    <property type="project" value="UniProtKB"/>
</dbReference>
<dbReference type="GO" id="GO:0006629">
    <property type="term" value="P:lipid metabolic process"/>
    <property type="evidence" value="ECO:0000250"/>
    <property type="project" value="UniProtKB"/>
</dbReference>
<dbReference type="GO" id="GO:0006869">
    <property type="term" value="P:lipid transport"/>
    <property type="evidence" value="ECO:0007669"/>
    <property type="project" value="InterPro"/>
</dbReference>
<dbReference type="GO" id="GO:1900016">
    <property type="term" value="P:negative regulation of cytokine production involved in inflammatory response"/>
    <property type="evidence" value="ECO:0000250"/>
    <property type="project" value="UniProtKB"/>
</dbReference>
<dbReference type="GO" id="GO:0051895">
    <property type="term" value="P:negative regulation of focal adhesion assembly"/>
    <property type="evidence" value="ECO:0000250"/>
    <property type="project" value="UniProtKB"/>
</dbReference>
<dbReference type="GO" id="GO:0060588">
    <property type="term" value="P:negative regulation of lipoprotein lipid oxidation"/>
    <property type="evidence" value="ECO:0000250"/>
    <property type="project" value="UniProtKB"/>
</dbReference>
<dbReference type="GO" id="GO:0071638">
    <property type="term" value="P:negative regulation of monocyte chemotactic protein-1 production"/>
    <property type="evidence" value="ECO:0000250"/>
    <property type="project" value="UniProtKB"/>
</dbReference>
<dbReference type="GO" id="GO:0010642">
    <property type="term" value="P:negative regulation of platelet-derived growth factor receptor signaling pathway"/>
    <property type="evidence" value="ECO:0000250"/>
    <property type="project" value="UniProtKB"/>
</dbReference>
<dbReference type="GO" id="GO:0042308">
    <property type="term" value="P:negative regulation of protein import into nucleus"/>
    <property type="evidence" value="ECO:0000250"/>
    <property type="project" value="UniProtKB"/>
</dbReference>
<dbReference type="GO" id="GO:0048662">
    <property type="term" value="P:negative regulation of smooth muscle cell proliferation"/>
    <property type="evidence" value="ECO:0000250"/>
    <property type="project" value="UniProtKB"/>
</dbReference>
<dbReference type="GO" id="GO:2000098">
    <property type="term" value="P:negative regulation of smooth muscle cell-matrix adhesion"/>
    <property type="evidence" value="ECO:0000250"/>
    <property type="project" value="UniProtKB"/>
</dbReference>
<dbReference type="GO" id="GO:2000405">
    <property type="term" value="P:negative regulation of T cell migration"/>
    <property type="evidence" value="ECO:0000250"/>
    <property type="project" value="UniProtKB"/>
</dbReference>
<dbReference type="GO" id="GO:0014012">
    <property type="term" value="P:peripheral nervous system axon regeneration"/>
    <property type="evidence" value="ECO:0000250"/>
    <property type="project" value="UniProtKB"/>
</dbReference>
<dbReference type="GO" id="GO:0048678">
    <property type="term" value="P:response to axon injury"/>
    <property type="evidence" value="ECO:0000250"/>
    <property type="project" value="UniProtKB"/>
</dbReference>
<dbReference type="GO" id="GO:0000302">
    <property type="term" value="P:response to reactive oxygen species"/>
    <property type="evidence" value="ECO:0000250"/>
    <property type="project" value="UniProtKB"/>
</dbReference>
<dbReference type="GO" id="GO:0042246">
    <property type="term" value="P:tissue regeneration"/>
    <property type="evidence" value="ECO:0000250"/>
    <property type="project" value="UniProtKB"/>
</dbReference>
<dbReference type="CDD" id="cd19437">
    <property type="entry name" value="lipocalin_apoD-like"/>
    <property type="match status" value="1"/>
</dbReference>
<dbReference type="FunFam" id="2.40.128.20:FF:000003">
    <property type="entry name" value="Apolipoprotein D"/>
    <property type="match status" value="1"/>
</dbReference>
<dbReference type="Gene3D" id="2.40.128.20">
    <property type="match status" value="1"/>
</dbReference>
<dbReference type="InterPro" id="IPR026222">
    <property type="entry name" value="ApoD_vertbrte"/>
</dbReference>
<dbReference type="InterPro" id="IPR002969">
    <property type="entry name" value="ApolipopD"/>
</dbReference>
<dbReference type="InterPro" id="IPR012674">
    <property type="entry name" value="Calycin"/>
</dbReference>
<dbReference type="InterPro" id="IPR022271">
    <property type="entry name" value="Lipocalin_ApoD"/>
</dbReference>
<dbReference type="InterPro" id="IPR022272">
    <property type="entry name" value="Lipocalin_CS"/>
</dbReference>
<dbReference type="InterPro" id="IPR000566">
    <property type="entry name" value="Lipocln_cytosolic_FA-bd_dom"/>
</dbReference>
<dbReference type="PANTHER" id="PTHR10612">
    <property type="entry name" value="APOLIPOPROTEIN D"/>
    <property type="match status" value="1"/>
</dbReference>
<dbReference type="PANTHER" id="PTHR10612:SF34">
    <property type="entry name" value="APOLIPOPROTEIN D"/>
    <property type="match status" value="1"/>
</dbReference>
<dbReference type="Pfam" id="PF00061">
    <property type="entry name" value="Lipocalin"/>
    <property type="match status" value="1"/>
</dbReference>
<dbReference type="PIRSF" id="PIRSF036893">
    <property type="entry name" value="Lipocalin_ApoD"/>
    <property type="match status" value="1"/>
</dbReference>
<dbReference type="PRINTS" id="PR02058">
    <property type="entry name" value="APODVERTBRTE"/>
</dbReference>
<dbReference type="PRINTS" id="PR01219">
    <property type="entry name" value="APOLIPOPROTD"/>
</dbReference>
<dbReference type="SUPFAM" id="SSF50814">
    <property type="entry name" value="Lipocalins"/>
    <property type="match status" value="1"/>
</dbReference>
<dbReference type="PROSITE" id="PS00213">
    <property type="entry name" value="LIPOCALIN"/>
    <property type="match status" value="1"/>
</dbReference>
<organism>
    <name type="scientific">Oryctolagus cuniculus</name>
    <name type="common">Rabbit</name>
    <dbReference type="NCBI Taxonomy" id="9986"/>
    <lineage>
        <taxon>Eukaryota</taxon>
        <taxon>Metazoa</taxon>
        <taxon>Chordata</taxon>
        <taxon>Craniata</taxon>
        <taxon>Vertebrata</taxon>
        <taxon>Euteleostomi</taxon>
        <taxon>Mammalia</taxon>
        <taxon>Eutheria</taxon>
        <taxon>Euarchontoglires</taxon>
        <taxon>Glires</taxon>
        <taxon>Lagomorpha</taxon>
        <taxon>Leporidae</taxon>
        <taxon>Oryctolagus</taxon>
    </lineage>
</organism>
<reference key="1">
    <citation type="journal article" date="1990" name="J. Lipid Res.">
        <title>Molecular characterization and differential mRNA tissue distribution of rabbit apolipoprotein D.</title>
        <authorList>
            <person name="Provost P.R."/>
            <person name="Weech P.K."/>
            <person name="Tremblay N.M."/>
            <person name="Marcel Y.L."/>
            <person name="Rassart E."/>
        </authorList>
    </citation>
    <scope>NUCLEOTIDE SEQUENCE [MRNA]</scope>
</reference>
<accession>P37153</accession>
<keyword id="KW-1015">Disulfide bond</keyword>
<keyword id="KW-0325">Glycoprotein</keyword>
<keyword id="KW-0446">Lipid-binding</keyword>
<keyword id="KW-0873">Pyrrolidone carboxylic acid</keyword>
<keyword id="KW-1185">Reference proteome</keyword>
<keyword id="KW-0964">Secreted</keyword>
<keyword id="KW-0732">Signal</keyword>
<keyword id="KW-0813">Transport</keyword>